<comment type="function">
    <text evidence="1">Binds directly to 23S ribosomal RNA and is necessary for the in vitro assembly process of the 50S ribosomal subunit. It is not involved in the protein synthesizing functions of that subunit.</text>
</comment>
<comment type="similarity">
    <text evidence="1">Belongs to the bacterial ribosomal protein bL20 family.</text>
</comment>
<keyword id="KW-1185">Reference proteome</keyword>
<keyword id="KW-0687">Ribonucleoprotein</keyword>
<keyword id="KW-0689">Ribosomal protein</keyword>
<keyword id="KW-0694">RNA-binding</keyword>
<keyword id="KW-0699">rRNA-binding</keyword>
<accession>Q92ST1</accession>
<dbReference type="EMBL" id="AL591688">
    <property type="protein sequence ID" value="CAC41721.1"/>
    <property type="molecule type" value="Genomic_DNA"/>
</dbReference>
<dbReference type="RefSeq" id="NP_384390.1">
    <property type="nucleotide sequence ID" value="NC_003047.1"/>
</dbReference>
<dbReference type="RefSeq" id="WP_004435481.1">
    <property type="nucleotide sequence ID" value="NC_003047.1"/>
</dbReference>
<dbReference type="SMR" id="Q92ST1"/>
<dbReference type="EnsemblBacteria" id="CAC41721">
    <property type="protein sequence ID" value="CAC41721"/>
    <property type="gene ID" value="SMc00364"/>
</dbReference>
<dbReference type="GeneID" id="89574610"/>
<dbReference type="KEGG" id="sme:SMc00364"/>
<dbReference type="PATRIC" id="fig|266834.11.peg.1653"/>
<dbReference type="eggNOG" id="COG0292">
    <property type="taxonomic scope" value="Bacteria"/>
</dbReference>
<dbReference type="HOGENOM" id="CLU_123265_0_1_5"/>
<dbReference type="OrthoDB" id="9808966at2"/>
<dbReference type="Proteomes" id="UP000001976">
    <property type="component" value="Chromosome"/>
</dbReference>
<dbReference type="GO" id="GO:1990904">
    <property type="term" value="C:ribonucleoprotein complex"/>
    <property type="evidence" value="ECO:0007669"/>
    <property type="project" value="UniProtKB-KW"/>
</dbReference>
<dbReference type="GO" id="GO:0005840">
    <property type="term" value="C:ribosome"/>
    <property type="evidence" value="ECO:0007669"/>
    <property type="project" value="UniProtKB-KW"/>
</dbReference>
<dbReference type="GO" id="GO:0019843">
    <property type="term" value="F:rRNA binding"/>
    <property type="evidence" value="ECO:0007669"/>
    <property type="project" value="UniProtKB-UniRule"/>
</dbReference>
<dbReference type="GO" id="GO:0003735">
    <property type="term" value="F:structural constituent of ribosome"/>
    <property type="evidence" value="ECO:0007669"/>
    <property type="project" value="InterPro"/>
</dbReference>
<dbReference type="GO" id="GO:0000027">
    <property type="term" value="P:ribosomal large subunit assembly"/>
    <property type="evidence" value="ECO:0007669"/>
    <property type="project" value="UniProtKB-UniRule"/>
</dbReference>
<dbReference type="GO" id="GO:0006412">
    <property type="term" value="P:translation"/>
    <property type="evidence" value="ECO:0007669"/>
    <property type="project" value="InterPro"/>
</dbReference>
<dbReference type="CDD" id="cd07026">
    <property type="entry name" value="Ribosomal_L20"/>
    <property type="match status" value="1"/>
</dbReference>
<dbReference type="FunFam" id="1.10.1900.20:FF:000001">
    <property type="entry name" value="50S ribosomal protein L20"/>
    <property type="match status" value="1"/>
</dbReference>
<dbReference type="Gene3D" id="6.10.160.10">
    <property type="match status" value="1"/>
</dbReference>
<dbReference type="Gene3D" id="1.10.1900.20">
    <property type="entry name" value="Ribosomal protein L20"/>
    <property type="match status" value="1"/>
</dbReference>
<dbReference type="HAMAP" id="MF_00382">
    <property type="entry name" value="Ribosomal_bL20"/>
    <property type="match status" value="1"/>
</dbReference>
<dbReference type="InterPro" id="IPR005813">
    <property type="entry name" value="Ribosomal_bL20"/>
</dbReference>
<dbReference type="InterPro" id="IPR049946">
    <property type="entry name" value="RIBOSOMAL_L20_CS"/>
</dbReference>
<dbReference type="InterPro" id="IPR035566">
    <property type="entry name" value="Ribosomal_protein_bL20_C"/>
</dbReference>
<dbReference type="NCBIfam" id="TIGR01032">
    <property type="entry name" value="rplT_bact"/>
    <property type="match status" value="1"/>
</dbReference>
<dbReference type="PANTHER" id="PTHR10986">
    <property type="entry name" value="39S RIBOSOMAL PROTEIN L20"/>
    <property type="match status" value="1"/>
</dbReference>
<dbReference type="Pfam" id="PF00453">
    <property type="entry name" value="Ribosomal_L20"/>
    <property type="match status" value="1"/>
</dbReference>
<dbReference type="PRINTS" id="PR00062">
    <property type="entry name" value="RIBOSOMALL20"/>
</dbReference>
<dbReference type="SUPFAM" id="SSF74731">
    <property type="entry name" value="Ribosomal protein L20"/>
    <property type="match status" value="1"/>
</dbReference>
<dbReference type="PROSITE" id="PS00937">
    <property type="entry name" value="RIBOSOMAL_L20"/>
    <property type="match status" value="1"/>
</dbReference>
<feature type="chain" id="PRO_0000177213" description="Large ribosomal subunit protein bL20">
    <location>
        <begin position="1"/>
        <end position="134"/>
    </location>
</feature>
<sequence>MARVKRGVTSHAKHKKTLKAAKGFYGRRKNTIRAAKAAVDRSKQFAYRDRKVNKRNFRALWIQRINAAVREFGLTYGRFIDGLNKAGIEVDRKVLSDMAIHEPAAFGALVEASKKALAYLKEAGTANEFESAVR</sequence>
<gene>
    <name evidence="1" type="primary">rplT</name>
    <name type="ordered locus">R00284</name>
    <name type="ORF">SMc00364</name>
</gene>
<evidence type="ECO:0000255" key="1">
    <source>
        <dbReference type="HAMAP-Rule" id="MF_00382"/>
    </source>
</evidence>
<evidence type="ECO:0000305" key="2"/>
<organism>
    <name type="scientific">Rhizobium meliloti (strain 1021)</name>
    <name type="common">Ensifer meliloti</name>
    <name type="synonym">Sinorhizobium meliloti</name>
    <dbReference type="NCBI Taxonomy" id="266834"/>
    <lineage>
        <taxon>Bacteria</taxon>
        <taxon>Pseudomonadati</taxon>
        <taxon>Pseudomonadota</taxon>
        <taxon>Alphaproteobacteria</taxon>
        <taxon>Hyphomicrobiales</taxon>
        <taxon>Rhizobiaceae</taxon>
        <taxon>Sinorhizobium/Ensifer group</taxon>
        <taxon>Sinorhizobium</taxon>
    </lineage>
</organism>
<proteinExistence type="inferred from homology"/>
<reference key="1">
    <citation type="journal article" date="2001" name="Proc. Natl. Acad. Sci. U.S.A.">
        <title>Analysis of the chromosome sequence of the legume symbiont Sinorhizobium meliloti strain 1021.</title>
        <authorList>
            <person name="Capela D."/>
            <person name="Barloy-Hubler F."/>
            <person name="Gouzy J."/>
            <person name="Bothe G."/>
            <person name="Ampe F."/>
            <person name="Batut J."/>
            <person name="Boistard P."/>
            <person name="Becker A."/>
            <person name="Boutry M."/>
            <person name="Cadieu E."/>
            <person name="Dreano S."/>
            <person name="Gloux S."/>
            <person name="Godrie T."/>
            <person name="Goffeau A."/>
            <person name="Kahn D."/>
            <person name="Kiss E."/>
            <person name="Lelaure V."/>
            <person name="Masuy D."/>
            <person name="Pohl T."/>
            <person name="Portetelle D."/>
            <person name="Puehler A."/>
            <person name="Purnelle B."/>
            <person name="Ramsperger U."/>
            <person name="Renard C."/>
            <person name="Thebault P."/>
            <person name="Vandenbol M."/>
            <person name="Weidner S."/>
            <person name="Galibert F."/>
        </authorList>
    </citation>
    <scope>NUCLEOTIDE SEQUENCE [LARGE SCALE GENOMIC DNA]</scope>
    <source>
        <strain>1021</strain>
    </source>
</reference>
<reference key="2">
    <citation type="journal article" date="2001" name="Science">
        <title>The composite genome of the legume symbiont Sinorhizobium meliloti.</title>
        <authorList>
            <person name="Galibert F."/>
            <person name="Finan T.M."/>
            <person name="Long S.R."/>
            <person name="Puehler A."/>
            <person name="Abola P."/>
            <person name="Ampe F."/>
            <person name="Barloy-Hubler F."/>
            <person name="Barnett M.J."/>
            <person name="Becker A."/>
            <person name="Boistard P."/>
            <person name="Bothe G."/>
            <person name="Boutry M."/>
            <person name="Bowser L."/>
            <person name="Buhrmester J."/>
            <person name="Cadieu E."/>
            <person name="Capela D."/>
            <person name="Chain P."/>
            <person name="Cowie A."/>
            <person name="Davis R.W."/>
            <person name="Dreano S."/>
            <person name="Federspiel N.A."/>
            <person name="Fisher R.F."/>
            <person name="Gloux S."/>
            <person name="Godrie T."/>
            <person name="Goffeau A."/>
            <person name="Golding B."/>
            <person name="Gouzy J."/>
            <person name="Gurjal M."/>
            <person name="Hernandez-Lucas I."/>
            <person name="Hong A."/>
            <person name="Huizar L."/>
            <person name="Hyman R.W."/>
            <person name="Jones T."/>
            <person name="Kahn D."/>
            <person name="Kahn M.L."/>
            <person name="Kalman S."/>
            <person name="Keating D.H."/>
            <person name="Kiss E."/>
            <person name="Komp C."/>
            <person name="Lelaure V."/>
            <person name="Masuy D."/>
            <person name="Palm C."/>
            <person name="Peck M.C."/>
            <person name="Pohl T.M."/>
            <person name="Portetelle D."/>
            <person name="Purnelle B."/>
            <person name="Ramsperger U."/>
            <person name="Surzycki R."/>
            <person name="Thebault P."/>
            <person name="Vandenbol M."/>
            <person name="Vorhoelter F.J."/>
            <person name="Weidner S."/>
            <person name="Wells D.H."/>
            <person name="Wong K."/>
            <person name="Yeh K.-C."/>
            <person name="Batut J."/>
        </authorList>
    </citation>
    <scope>NUCLEOTIDE SEQUENCE [LARGE SCALE GENOMIC DNA]</scope>
    <source>
        <strain>1021</strain>
    </source>
</reference>
<protein>
    <recommendedName>
        <fullName evidence="1">Large ribosomal subunit protein bL20</fullName>
    </recommendedName>
    <alternativeName>
        <fullName evidence="2">50S ribosomal protein L20</fullName>
    </alternativeName>
</protein>
<name>RL20_RHIME</name>